<proteinExistence type="inferred from homology"/>
<dbReference type="EMBL" id="CP000036">
    <property type="protein sequence ID" value="ABB67780.1"/>
    <property type="molecule type" value="Genomic_DNA"/>
</dbReference>
<dbReference type="RefSeq" id="WP_000090775.1">
    <property type="nucleotide sequence ID" value="NC_007613.1"/>
</dbReference>
<dbReference type="SMR" id="Q31VX8"/>
<dbReference type="GeneID" id="93778689"/>
<dbReference type="KEGG" id="sbo:SBO_3292"/>
<dbReference type="HOGENOM" id="CLU_103849_1_2_6"/>
<dbReference type="Proteomes" id="UP000007067">
    <property type="component" value="Chromosome"/>
</dbReference>
<dbReference type="GO" id="GO:0005829">
    <property type="term" value="C:cytosol"/>
    <property type="evidence" value="ECO:0007669"/>
    <property type="project" value="TreeGrafter"/>
</dbReference>
<dbReference type="GO" id="GO:0015935">
    <property type="term" value="C:small ribosomal subunit"/>
    <property type="evidence" value="ECO:0007669"/>
    <property type="project" value="TreeGrafter"/>
</dbReference>
<dbReference type="GO" id="GO:0019843">
    <property type="term" value="F:rRNA binding"/>
    <property type="evidence" value="ECO:0007669"/>
    <property type="project" value="UniProtKB-UniRule"/>
</dbReference>
<dbReference type="GO" id="GO:0003735">
    <property type="term" value="F:structural constituent of ribosome"/>
    <property type="evidence" value="ECO:0007669"/>
    <property type="project" value="InterPro"/>
</dbReference>
<dbReference type="GO" id="GO:0000049">
    <property type="term" value="F:tRNA binding"/>
    <property type="evidence" value="ECO:0007669"/>
    <property type="project" value="UniProtKB-UniRule"/>
</dbReference>
<dbReference type="GO" id="GO:0006412">
    <property type="term" value="P:translation"/>
    <property type="evidence" value="ECO:0007669"/>
    <property type="project" value="UniProtKB-UniRule"/>
</dbReference>
<dbReference type="FunFam" id="1.10.8.50:FF:000001">
    <property type="entry name" value="30S ribosomal protein S13"/>
    <property type="match status" value="1"/>
</dbReference>
<dbReference type="FunFam" id="4.10.910.10:FF:000001">
    <property type="entry name" value="30S ribosomal protein S13"/>
    <property type="match status" value="1"/>
</dbReference>
<dbReference type="Gene3D" id="1.10.8.50">
    <property type="match status" value="1"/>
</dbReference>
<dbReference type="Gene3D" id="4.10.910.10">
    <property type="entry name" value="30s ribosomal protein s13, domain 2"/>
    <property type="match status" value="1"/>
</dbReference>
<dbReference type="HAMAP" id="MF_01315">
    <property type="entry name" value="Ribosomal_uS13"/>
    <property type="match status" value="1"/>
</dbReference>
<dbReference type="InterPro" id="IPR027437">
    <property type="entry name" value="Rbsml_uS13_C"/>
</dbReference>
<dbReference type="InterPro" id="IPR001892">
    <property type="entry name" value="Ribosomal_uS13"/>
</dbReference>
<dbReference type="InterPro" id="IPR010979">
    <property type="entry name" value="Ribosomal_uS13-like_H2TH"/>
</dbReference>
<dbReference type="InterPro" id="IPR019980">
    <property type="entry name" value="Ribosomal_uS13_bac-type"/>
</dbReference>
<dbReference type="InterPro" id="IPR018269">
    <property type="entry name" value="Ribosomal_uS13_CS"/>
</dbReference>
<dbReference type="NCBIfam" id="TIGR03631">
    <property type="entry name" value="uS13_bact"/>
    <property type="match status" value="1"/>
</dbReference>
<dbReference type="PANTHER" id="PTHR10871">
    <property type="entry name" value="30S RIBOSOMAL PROTEIN S13/40S RIBOSOMAL PROTEIN S18"/>
    <property type="match status" value="1"/>
</dbReference>
<dbReference type="PANTHER" id="PTHR10871:SF1">
    <property type="entry name" value="SMALL RIBOSOMAL SUBUNIT PROTEIN US13M"/>
    <property type="match status" value="1"/>
</dbReference>
<dbReference type="Pfam" id="PF00416">
    <property type="entry name" value="Ribosomal_S13"/>
    <property type="match status" value="1"/>
</dbReference>
<dbReference type="PIRSF" id="PIRSF002134">
    <property type="entry name" value="Ribosomal_S13"/>
    <property type="match status" value="1"/>
</dbReference>
<dbReference type="SUPFAM" id="SSF46946">
    <property type="entry name" value="S13-like H2TH domain"/>
    <property type="match status" value="1"/>
</dbReference>
<dbReference type="PROSITE" id="PS00646">
    <property type="entry name" value="RIBOSOMAL_S13_1"/>
    <property type="match status" value="1"/>
</dbReference>
<dbReference type="PROSITE" id="PS50159">
    <property type="entry name" value="RIBOSOMAL_S13_2"/>
    <property type="match status" value="1"/>
</dbReference>
<comment type="function">
    <text evidence="1">Located at the top of the head of the 30S subunit, it contacts several helices of the 16S rRNA. In the 70S ribosome it contacts the 23S rRNA (bridge B1a) and protein L5 of the 50S subunit (bridge B1b), connecting the 2 subunits; these bridges are implicated in subunit movement. Contacts the tRNAs in the A and P-sites.</text>
</comment>
<comment type="subunit">
    <text evidence="1">Part of the 30S ribosomal subunit. Forms a loose heterodimer with protein S19. Forms two bridges to the 50S subunit in the 70S ribosome.</text>
</comment>
<comment type="similarity">
    <text evidence="1">Belongs to the universal ribosomal protein uS13 family.</text>
</comment>
<gene>
    <name evidence="1" type="primary">rpsM</name>
    <name type="ordered locus">SBO_3292</name>
</gene>
<organism>
    <name type="scientific">Shigella boydii serotype 4 (strain Sb227)</name>
    <dbReference type="NCBI Taxonomy" id="300268"/>
    <lineage>
        <taxon>Bacteria</taxon>
        <taxon>Pseudomonadati</taxon>
        <taxon>Pseudomonadota</taxon>
        <taxon>Gammaproteobacteria</taxon>
        <taxon>Enterobacterales</taxon>
        <taxon>Enterobacteriaceae</taxon>
        <taxon>Shigella</taxon>
    </lineage>
</organism>
<name>RS13_SHIBS</name>
<feature type="chain" id="PRO_0000230563" description="Small ribosomal subunit protein uS13">
    <location>
        <begin position="1"/>
        <end position="118"/>
    </location>
</feature>
<feature type="region of interest" description="Disordered" evidence="2">
    <location>
        <begin position="94"/>
        <end position="118"/>
    </location>
</feature>
<evidence type="ECO:0000255" key="1">
    <source>
        <dbReference type="HAMAP-Rule" id="MF_01315"/>
    </source>
</evidence>
<evidence type="ECO:0000256" key="2">
    <source>
        <dbReference type="SAM" id="MobiDB-lite"/>
    </source>
</evidence>
<evidence type="ECO:0000305" key="3"/>
<reference key="1">
    <citation type="journal article" date="2005" name="Nucleic Acids Res.">
        <title>Genome dynamics and diversity of Shigella species, the etiologic agents of bacillary dysentery.</title>
        <authorList>
            <person name="Yang F."/>
            <person name="Yang J."/>
            <person name="Zhang X."/>
            <person name="Chen L."/>
            <person name="Jiang Y."/>
            <person name="Yan Y."/>
            <person name="Tang X."/>
            <person name="Wang J."/>
            <person name="Xiong Z."/>
            <person name="Dong J."/>
            <person name="Xue Y."/>
            <person name="Zhu Y."/>
            <person name="Xu X."/>
            <person name="Sun L."/>
            <person name="Chen S."/>
            <person name="Nie H."/>
            <person name="Peng J."/>
            <person name="Xu J."/>
            <person name="Wang Y."/>
            <person name="Yuan Z."/>
            <person name="Wen Y."/>
            <person name="Yao Z."/>
            <person name="Shen Y."/>
            <person name="Qiang B."/>
            <person name="Hou Y."/>
            <person name="Yu J."/>
            <person name="Jin Q."/>
        </authorList>
    </citation>
    <scope>NUCLEOTIDE SEQUENCE [LARGE SCALE GENOMIC DNA]</scope>
    <source>
        <strain>Sb227</strain>
    </source>
</reference>
<accession>Q31VX8</accession>
<keyword id="KW-0687">Ribonucleoprotein</keyword>
<keyword id="KW-0689">Ribosomal protein</keyword>
<keyword id="KW-0694">RNA-binding</keyword>
<keyword id="KW-0699">rRNA-binding</keyword>
<keyword id="KW-0820">tRNA-binding</keyword>
<sequence length="118" mass="13099">MARIAGINIPDHKHAVIALTSIYGVGKTRSKAILAAAGIAEDVKISELSEGQIDTLRDEVAKFVVEGDLRREISMSIKRLMDLGCYRGLRHRRGLPVRGQRTKTNARTRKGPRKPIKK</sequence>
<protein>
    <recommendedName>
        <fullName evidence="1">Small ribosomal subunit protein uS13</fullName>
    </recommendedName>
    <alternativeName>
        <fullName evidence="3">30S ribosomal protein S13</fullName>
    </alternativeName>
</protein>